<protein>
    <recommendedName>
        <fullName evidence="1">Serine hydroxymethyltransferase</fullName>
        <shortName evidence="1">SHMT</shortName>
        <shortName evidence="1">Serine methylase</shortName>
        <ecNumber evidence="1">2.1.2.1</ecNumber>
    </recommendedName>
</protein>
<organism>
    <name type="scientific">Amoebophilus asiaticus (strain 5a2)</name>
    <dbReference type="NCBI Taxonomy" id="452471"/>
    <lineage>
        <taxon>Bacteria</taxon>
        <taxon>Pseudomonadati</taxon>
        <taxon>Bacteroidota</taxon>
        <taxon>Cytophagia</taxon>
        <taxon>Cytophagales</taxon>
        <taxon>Amoebophilaceae</taxon>
        <taxon>Candidatus Amoebophilus</taxon>
    </lineage>
</organism>
<keyword id="KW-0028">Amino-acid biosynthesis</keyword>
<keyword id="KW-0963">Cytoplasm</keyword>
<keyword id="KW-0554">One-carbon metabolism</keyword>
<keyword id="KW-0663">Pyridoxal phosphate</keyword>
<keyword id="KW-1185">Reference proteome</keyword>
<keyword id="KW-0808">Transferase</keyword>
<sequence>MLRDTQIFTLIEKEYQRQNEGLELIASENFVSQQIMEAAGSILTNKYAEGLPGRRYYGGCEIVDEIETLAIERAKSLFHASWANVQPHSGSQANAAVMFAVLEPGDKILGFNLAHGGHLTHGSPVNFSGQLYESHFYGVQPETGLIDWEEVGTIAEQVNPKLIICGASAYSRDWDYKRLRAIADQVGALLLADISHPAGLISRGLLNDPVPYCHFITTTTHKTLRGPRGGMILMGADFENPFGKKTTKGKLKSMSTLLDASVFPGIQGGPLEHIIAAKAIAFQEAMSDDYFNYILQVQKNTRQLAQSFVKRGYNIVSGGTDNHLILIDLRNKGITGKLAEEALIKASITLNKNMVPFDDQSPLITSGIRIGTPAVTTRGMQETDMEQIAAWIDDVLKNHENESKIDSIRKEIGNYMLQFPLP</sequence>
<comment type="function">
    <text evidence="1">Catalyzes the reversible interconversion of serine and glycine with tetrahydrofolate (THF) serving as the one-carbon carrier. This reaction serves as the major source of one-carbon groups required for the biosynthesis of purines, thymidylate, methionine, and other important biomolecules. Also exhibits THF-independent aldolase activity toward beta-hydroxyamino acids, producing glycine and aldehydes, via a retro-aldol mechanism.</text>
</comment>
<comment type="catalytic activity">
    <reaction evidence="1">
        <text>(6R)-5,10-methylene-5,6,7,8-tetrahydrofolate + glycine + H2O = (6S)-5,6,7,8-tetrahydrofolate + L-serine</text>
        <dbReference type="Rhea" id="RHEA:15481"/>
        <dbReference type="ChEBI" id="CHEBI:15377"/>
        <dbReference type="ChEBI" id="CHEBI:15636"/>
        <dbReference type="ChEBI" id="CHEBI:33384"/>
        <dbReference type="ChEBI" id="CHEBI:57305"/>
        <dbReference type="ChEBI" id="CHEBI:57453"/>
        <dbReference type="EC" id="2.1.2.1"/>
    </reaction>
</comment>
<comment type="cofactor">
    <cofactor evidence="1">
        <name>pyridoxal 5'-phosphate</name>
        <dbReference type="ChEBI" id="CHEBI:597326"/>
    </cofactor>
</comment>
<comment type="pathway">
    <text evidence="1">One-carbon metabolism; tetrahydrofolate interconversion.</text>
</comment>
<comment type="pathway">
    <text evidence="1">Amino-acid biosynthesis; glycine biosynthesis; glycine from L-serine: step 1/1.</text>
</comment>
<comment type="subunit">
    <text evidence="1">Homodimer.</text>
</comment>
<comment type="subcellular location">
    <subcellularLocation>
        <location evidence="1">Cytoplasm</location>
    </subcellularLocation>
</comment>
<comment type="similarity">
    <text evidence="1">Belongs to the SHMT family.</text>
</comment>
<proteinExistence type="inferred from homology"/>
<feature type="chain" id="PRO_1000091514" description="Serine hydroxymethyltransferase">
    <location>
        <begin position="1"/>
        <end position="422"/>
    </location>
</feature>
<feature type="binding site" evidence="1">
    <location>
        <position position="113"/>
    </location>
    <ligand>
        <name>(6S)-5,6,7,8-tetrahydrofolate</name>
        <dbReference type="ChEBI" id="CHEBI:57453"/>
    </ligand>
</feature>
<feature type="binding site" evidence="1">
    <location>
        <begin position="117"/>
        <end position="119"/>
    </location>
    <ligand>
        <name>(6S)-5,6,7,8-tetrahydrofolate</name>
        <dbReference type="ChEBI" id="CHEBI:57453"/>
    </ligand>
</feature>
<feature type="site" description="Plays an important role in substrate specificity" evidence="1">
    <location>
        <position position="221"/>
    </location>
</feature>
<feature type="modified residue" description="N6-(pyridoxal phosphate)lysine" evidence="1">
    <location>
        <position position="222"/>
    </location>
</feature>
<accession>B3ER62</accession>
<dbReference type="EC" id="2.1.2.1" evidence="1"/>
<dbReference type="EMBL" id="CP001102">
    <property type="protein sequence ID" value="ACE05714.1"/>
    <property type="molecule type" value="Genomic_DNA"/>
</dbReference>
<dbReference type="RefSeq" id="WP_012472476.1">
    <property type="nucleotide sequence ID" value="NC_010830.1"/>
</dbReference>
<dbReference type="SMR" id="B3ER62"/>
<dbReference type="STRING" id="452471.Aasi_0275"/>
<dbReference type="KEGG" id="aas:Aasi_0275"/>
<dbReference type="eggNOG" id="COG0112">
    <property type="taxonomic scope" value="Bacteria"/>
</dbReference>
<dbReference type="HOGENOM" id="CLU_022477_2_1_10"/>
<dbReference type="OrthoDB" id="9803846at2"/>
<dbReference type="UniPathway" id="UPA00193"/>
<dbReference type="UniPathway" id="UPA00288">
    <property type="reaction ID" value="UER01023"/>
</dbReference>
<dbReference type="Proteomes" id="UP000001227">
    <property type="component" value="Chromosome"/>
</dbReference>
<dbReference type="GO" id="GO:0005829">
    <property type="term" value="C:cytosol"/>
    <property type="evidence" value="ECO:0007669"/>
    <property type="project" value="TreeGrafter"/>
</dbReference>
<dbReference type="GO" id="GO:0004372">
    <property type="term" value="F:glycine hydroxymethyltransferase activity"/>
    <property type="evidence" value="ECO:0007669"/>
    <property type="project" value="UniProtKB-UniRule"/>
</dbReference>
<dbReference type="GO" id="GO:0030170">
    <property type="term" value="F:pyridoxal phosphate binding"/>
    <property type="evidence" value="ECO:0007669"/>
    <property type="project" value="UniProtKB-UniRule"/>
</dbReference>
<dbReference type="GO" id="GO:0019264">
    <property type="term" value="P:glycine biosynthetic process from serine"/>
    <property type="evidence" value="ECO:0007669"/>
    <property type="project" value="UniProtKB-UniRule"/>
</dbReference>
<dbReference type="GO" id="GO:0035999">
    <property type="term" value="P:tetrahydrofolate interconversion"/>
    <property type="evidence" value="ECO:0007669"/>
    <property type="project" value="UniProtKB-UniRule"/>
</dbReference>
<dbReference type="CDD" id="cd00378">
    <property type="entry name" value="SHMT"/>
    <property type="match status" value="1"/>
</dbReference>
<dbReference type="FunFam" id="3.40.640.10:FF:000001">
    <property type="entry name" value="Serine hydroxymethyltransferase"/>
    <property type="match status" value="1"/>
</dbReference>
<dbReference type="Gene3D" id="3.90.1150.10">
    <property type="entry name" value="Aspartate Aminotransferase, domain 1"/>
    <property type="match status" value="1"/>
</dbReference>
<dbReference type="Gene3D" id="3.40.640.10">
    <property type="entry name" value="Type I PLP-dependent aspartate aminotransferase-like (Major domain)"/>
    <property type="match status" value="1"/>
</dbReference>
<dbReference type="HAMAP" id="MF_00051">
    <property type="entry name" value="SHMT"/>
    <property type="match status" value="1"/>
</dbReference>
<dbReference type="InterPro" id="IPR015424">
    <property type="entry name" value="PyrdxlP-dep_Trfase"/>
</dbReference>
<dbReference type="InterPro" id="IPR015421">
    <property type="entry name" value="PyrdxlP-dep_Trfase_major"/>
</dbReference>
<dbReference type="InterPro" id="IPR015422">
    <property type="entry name" value="PyrdxlP-dep_Trfase_small"/>
</dbReference>
<dbReference type="InterPro" id="IPR001085">
    <property type="entry name" value="Ser_HO-MeTrfase"/>
</dbReference>
<dbReference type="InterPro" id="IPR049943">
    <property type="entry name" value="Ser_HO-MeTrfase-like"/>
</dbReference>
<dbReference type="InterPro" id="IPR019798">
    <property type="entry name" value="Ser_HO-MeTrfase_PLP_BS"/>
</dbReference>
<dbReference type="InterPro" id="IPR039429">
    <property type="entry name" value="SHMT-like_dom"/>
</dbReference>
<dbReference type="NCBIfam" id="NF000586">
    <property type="entry name" value="PRK00011.1"/>
    <property type="match status" value="1"/>
</dbReference>
<dbReference type="PANTHER" id="PTHR11680">
    <property type="entry name" value="SERINE HYDROXYMETHYLTRANSFERASE"/>
    <property type="match status" value="1"/>
</dbReference>
<dbReference type="PANTHER" id="PTHR11680:SF35">
    <property type="entry name" value="SERINE HYDROXYMETHYLTRANSFERASE 1"/>
    <property type="match status" value="1"/>
</dbReference>
<dbReference type="Pfam" id="PF00464">
    <property type="entry name" value="SHMT"/>
    <property type="match status" value="1"/>
</dbReference>
<dbReference type="PIRSF" id="PIRSF000412">
    <property type="entry name" value="SHMT"/>
    <property type="match status" value="1"/>
</dbReference>
<dbReference type="SUPFAM" id="SSF53383">
    <property type="entry name" value="PLP-dependent transferases"/>
    <property type="match status" value="1"/>
</dbReference>
<dbReference type="PROSITE" id="PS00096">
    <property type="entry name" value="SHMT"/>
    <property type="match status" value="1"/>
</dbReference>
<name>GLYA_AMOA5</name>
<evidence type="ECO:0000255" key="1">
    <source>
        <dbReference type="HAMAP-Rule" id="MF_00051"/>
    </source>
</evidence>
<reference key="1">
    <citation type="journal article" date="2010" name="J. Bacteriol.">
        <title>The genome of the amoeba symbiont 'Candidatus Amoebophilus asiaticus' reveals common mechanisms for host cell interaction among amoeba-associated bacteria.</title>
        <authorList>
            <person name="Schmitz-Esser S."/>
            <person name="Tischler P."/>
            <person name="Arnold R."/>
            <person name="Montanaro J."/>
            <person name="Wagner M."/>
            <person name="Rattei T."/>
            <person name="Horn M."/>
        </authorList>
    </citation>
    <scope>NUCLEOTIDE SEQUENCE [LARGE SCALE GENOMIC DNA]</scope>
    <source>
        <strain>5a2</strain>
    </source>
</reference>
<gene>
    <name evidence="1" type="primary">glyA</name>
    <name type="ordered locus">Aasi_0275</name>
</gene>